<evidence type="ECO:0000255" key="1">
    <source>
        <dbReference type="HAMAP-Rule" id="MF_00077"/>
    </source>
</evidence>
<feature type="chain" id="PRO_0000365305" description="tRNA (cytidine(56)-2'-O)-methyltransferase">
    <location>
        <begin position="1"/>
        <end position="180"/>
    </location>
</feature>
<feature type="binding site" evidence="1">
    <location>
        <position position="83"/>
    </location>
    <ligand>
        <name>S-adenosyl-L-methionine</name>
        <dbReference type="ChEBI" id="CHEBI:59789"/>
    </ligand>
</feature>
<feature type="binding site" evidence="1">
    <location>
        <begin position="115"/>
        <end position="119"/>
    </location>
    <ligand>
        <name>S-adenosyl-L-methionine</name>
        <dbReference type="ChEBI" id="CHEBI:59789"/>
    </ligand>
</feature>
<feature type="binding site" evidence="1">
    <location>
        <begin position="133"/>
        <end position="140"/>
    </location>
    <ligand>
        <name>S-adenosyl-L-methionine</name>
        <dbReference type="ChEBI" id="CHEBI:59789"/>
    </ligand>
</feature>
<sequence length="180" mass="20660">MVVEVLRLGHRWGRDKRISTHVALTSRALGADKILFVSNDDHVKDSVNRIVEQWGGDFKFDVVDSWKQYIWSFKKNNGIVIHLTMYGENINEIMKKIIEKRQEGKDSKNILIIIGAEKVPKEAYELADYNVSVGNQPHSEVAAIAILLDRLFEGSSLYKEYPDAKIKVNPSDRYKSVEIR</sequence>
<organism>
    <name type="scientific">Methanococcus aeolicus (strain ATCC BAA-1280 / DSM 17508 / OCM 812 / Nankai-3)</name>
    <dbReference type="NCBI Taxonomy" id="419665"/>
    <lineage>
        <taxon>Archaea</taxon>
        <taxon>Methanobacteriati</taxon>
        <taxon>Methanobacteriota</taxon>
        <taxon>Methanomada group</taxon>
        <taxon>Methanococci</taxon>
        <taxon>Methanococcales</taxon>
        <taxon>Methanococcaceae</taxon>
        <taxon>Methanococcus</taxon>
    </lineage>
</organism>
<reference key="1">
    <citation type="submission" date="2007-06" db="EMBL/GenBank/DDBJ databases">
        <title>Complete sequence of Methanococcus aeolicus Nankai-3.</title>
        <authorList>
            <consortium name="US DOE Joint Genome Institute"/>
            <person name="Copeland A."/>
            <person name="Lucas S."/>
            <person name="Lapidus A."/>
            <person name="Barry K."/>
            <person name="Glavina del Rio T."/>
            <person name="Dalin E."/>
            <person name="Tice H."/>
            <person name="Pitluck S."/>
            <person name="Chain P."/>
            <person name="Malfatti S."/>
            <person name="Shin M."/>
            <person name="Vergez L."/>
            <person name="Schmutz J."/>
            <person name="Larimer F."/>
            <person name="Land M."/>
            <person name="Hauser L."/>
            <person name="Kyrpides N."/>
            <person name="Lykidis A."/>
            <person name="Sieprawska-Lupa M."/>
            <person name="Whitman W.B."/>
            <person name="Richardson P."/>
        </authorList>
    </citation>
    <scope>NUCLEOTIDE SEQUENCE [LARGE SCALE GENOMIC DNA]</scope>
    <source>
        <strain>ATCC BAA-1280 / DSM 17508 / OCM 812 / Nankai-3</strain>
    </source>
</reference>
<dbReference type="EC" id="2.1.1.206" evidence="1"/>
<dbReference type="EMBL" id="CP000743">
    <property type="protein sequence ID" value="ABR56986.1"/>
    <property type="molecule type" value="Genomic_DNA"/>
</dbReference>
<dbReference type="RefSeq" id="WP_011974118.1">
    <property type="nucleotide sequence ID" value="NC_009635.1"/>
</dbReference>
<dbReference type="SMR" id="A6UWW4"/>
<dbReference type="STRING" id="419665.Maeo_1410"/>
<dbReference type="GeneID" id="5326710"/>
<dbReference type="KEGG" id="mae:Maeo_1410"/>
<dbReference type="eggNOG" id="arCOG01857">
    <property type="taxonomic scope" value="Archaea"/>
</dbReference>
<dbReference type="HOGENOM" id="CLU_123709_0_0_2"/>
<dbReference type="OrthoDB" id="14397at2157"/>
<dbReference type="Proteomes" id="UP000001106">
    <property type="component" value="Chromosome"/>
</dbReference>
<dbReference type="GO" id="GO:0005737">
    <property type="term" value="C:cytoplasm"/>
    <property type="evidence" value="ECO:0007669"/>
    <property type="project" value="UniProtKB-SubCell"/>
</dbReference>
<dbReference type="GO" id="GO:0106059">
    <property type="term" value="F:tRNA (cytidine(56)-2'-O)-methyltransferase activity"/>
    <property type="evidence" value="ECO:0007669"/>
    <property type="project" value="UniProtKB-EC"/>
</dbReference>
<dbReference type="GO" id="GO:0002128">
    <property type="term" value="P:tRNA nucleoside ribose methylation"/>
    <property type="evidence" value="ECO:0007669"/>
    <property type="project" value="UniProtKB-UniRule"/>
</dbReference>
<dbReference type="CDD" id="cd18083">
    <property type="entry name" value="aTrm56-like"/>
    <property type="match status" value="1"/>
</dbReference>
<dbReference type="Gene3D" id="3.40.1280.10">
    <property type="match status" value="1"/>
</dbReference>
<dbReference type="HAMAP" id="MF_00077">
    <property type="entry name" value="tRNA_methyltr_aTrm56"/>
    <property type="match status" value="1"/>
</dbReference>
<dbReference type="InterPro" id="IPR029028">
    <property type="entry name" value="Alpha/beta_knot_MTases"/>
</dbReference>
<dbReference type="InterPro" id="IPR029026">
    <property type="entry name" value="tRNA_m1G_MTases_N"/>
</dbReference>
<dbReference type="InterPro" id="IPR002845">
    <property type="entry name" value="tRNA_mtfrase_aTrm56"/>
</dbReference>
<dbReference type="NCBIfam" id="NF003048">
    <property type="entry name" value="PRK03958.1"/>
    <property type="match status" value="1"/>
</dbReference>
<dbReference type="PANTHER" id="PTHR42197">
    <property type="entry name" value="TRNA (CYTIDINE(56)-2'-O)-METHYLTRANSFERASE"/>
    <property type="match status" value="1"/>
</dbReference>
<dbReference type="PANTHER" id="PTHR42197:SF1">
    <property type="entry name" value="TRNA (CYTIDINE(56)-2'-O)-METHYLTRANSFERASE"/>
    <property type="match status" value="1"/>
</dbReference>
<dbReference type="Pfam" id="PF01994">
    <property type="entry name" value="Trm56"/>
    <property type="match status" value="1"/>
</dbReference>
<dbReference type="PIRSF" id="PIRSF016123">
    <property type="entry name" value="UCP016123"/>
    <property type="match status" value="1"/>
</dbReference>
<dbReference type="SUPFAM" id="SSF75217">
    <property type="entry name" value="alpha/beta knot"/>
    <property type="match status" value="1"/>
</dbReference>
<protein>
    <recommendedName>
        <fullName evidence="1">tRNA (cytidine(56)-2'-O)-methyltransferase</fullName>
        <ecNumber evidence="1">2.1.1.206</ecNumber>
    </recommendedName>
    <alternativeName>
        <fullName evidence="1">tRNA ribose 2'-O-methyltransferase aTrm56</fullName>
    </alternativeName>
</protein>
<comment type="function">
    <text evidence="1">Specifically catalyzes the AdoMet-dependent 2'-O-ribose methylation of cytidine at position 56 in tRNAs.</text>
</comment>
<comment type="catalytic activity">
    <reaction evidence="1">
        <text>cytidine(56) in tRNA + S-adenosyl-L-methionine = 2'-O-methylcytidine(56) in tRNA + S-adenosyl-L-homocysteine + H(+)</text>
        <dbReference type="Rhea" id="RHEA:42968"/>
        <dbReference type="Rhea" id="RHEA-COMP:10308"/>
        <dbReference type="Rhea" id="RHEA-COMP:10309"/>
        <dbReference type="ChEBI" id="CHEBI:15378"/>
        <dbReference type="ChEBI" id="CHEBI:57856"/>
        <dbReference type="ChEBI" id="CHEBI:59789"/>
        <dbReference type="ChEBI" id="CHEBI:74495"/>
        <dbReference type="ChEBI" id="CHEBI:82748"/>
        <dbReference type="EC" id="2.1.1.206"/>
    </reaction>
</comment>
<comment type="subunit">
    <text evidence="1">Homodimer.</text>
</comment>
<comment type="subcellular location">
    <subcellularLocation>
        <location evidence="1">Cytoplasm</location>
    </subcellularLocation>
</comment>
<comment type="similarity">
    <text evidence="1">Belongs to the aTrm56 family.</text>
</comment>
<accession>A6UWW4</accession>
<gene>
    <name type="ordered locus">Maeo_1410</name>
</gene>
<keyword id="KW-0963">Cytoplasm</keyword>
<keyword id="KW-0489">Methyltransferase</keyword>
<keyword id="KW-0949">S-adenosyl-L-methionine</keyword>
<keyword id="KW-0808">Transferase</keyword>
<keyword id="KW-0819">tRNA processing</keyword>
<proteinExistence type="inferred from homology"/>
<name>TRM56_META3</name>